<comment type="subunit">
    <text evidence="1">Part of the 50S ribosomal subunit.</text>
</comment>
<comment type="similarity">
    <text evidence="1">Belongs to the universal ribosomal protein uL30 family.</text>
</comment>
<accession>A9MSY0</accession>
<organism>
    <name type="scientific">Salmonella paratyphi B (strain ATCC BAA-1250 / SPB7)</name>
    <dbReference type="NCBI Taxonomy" id="1016998"/>
    <lineage>
        <taxon>Bacteria</taxon>
        <taxon>Pseudomonadati</taxon>
        <taxon>Pseudomonadota</taxon>
        <taxon>Gammaproteobacteria</taxon>
        <taxon>Enterobacterales</taxon>
        <taxon>Enterobacteriaceae</taxon>
        <taxon>Salmonella</taxon>
    </lineage>
</organism>
<dbReference type="EMBL" id="CP000886">
    <property type="protein sequence ID" value="ABX69580.1"/>
    <property type="molecule type" value="Genomic_DNA"/>
</dbReference>
<dbReference type="RefSeq" id="WP_001140434.1">
    <property type="nucleotide sequence ID" value="NC_010102.1"/>
</dbReference>
<dbReference type="SMR" id="A9MSY0"/>
<dbReference type="GeneID" id="97393185"/>
<dbReference type="KEGG" id="spq:SPAB_04263"/>
<dbReference type="PATRIC" id="fig|1016998.12.peg.4009"/>
<dbReference type="HOGENOM" id="CLU_131047_1_4_6"/>
<dbReference type="BioCyc" id="SENT1016998:SPAB_RS17345-MONOMER"/>
<dbReference type="Proteomes" id="UP000008556">
    <property type="component" value="Chromosome"/>
</dbReference>
<dbReference type="GO" id="GO:0022625">
    <property type="term" value="C:cytosolic large ribosomal subunit"/>
    <property type="evidence" value="ECO:0007669"/>
    <property type="project" value="TreeGrafter"/>
</dbReference>
<dbReference type="GO" id="GO:0003735">
    <property type="term" value="F:structural constituent of ribosome"/>
    <property type="evidence" value="ECO:0007669"/>
    <property type="project" value="InterPro"/>
</dbReference>
<dbReference type="GO" id="GO:0006412">
    <property type="term" value="P:translation"/>
    <property type="evidence" value="ECO:0007669"/>
    <property type="project" value="UniProtKB-UniRule"/>
</dbReference>
<dbReference type="CDD" id="cd01658">
    <property type="entry name" value="Ribosomal_L30"/>
    <property type="match status" value="1"/>
</dbReference>
<dbReference type="FunFam" id="3.30.1390.20:FF:000001">
    <property type="entry name" value="50S ribosomal protein L30"/>
    <property type="match status" value="1"/>
</dbReference>
<dbReference type="Gene3D" id="3.30.1390.20">
    <property type="entry name" value="Ribosomal protein L30, ferredoxin-like fold domain"/>
    <property type="match status" value="1"/>
</dbReference>
<dbReference type="HAMAP" id="MF_01371_B">
    <property type="entry name" value="Ribosomal_uL30_B"/>
    <property type="match status" value="1"/>
</dbReference>
<dbReference type="InterPro" id="IPR036919">
    <property type="entry name" value="Ribo_uL30_ferredoxin-like_sf"/>
</dbReference>
<dbReference type="InterPro" id="IPR005996">
    <property type="entry name" value="Ribosomal_uL30_bac-type"/>
</dbReference>
<dbReference type="InterPro" id="IPR018038">
    <property type="entry name" value="Ribosomal_uL30_CS"/>
</dbReference>
<dbReference type="InterPro" id="IPR016082">
    <property type="entry name" value="Ribosomal_uL30_ferredoxin-like"/>
</dbReference>
<dbReference type="NCBIfam" id="TIGR01308">
    <property type="entry name" value="rpmD_bact"/>
    <property type="match status" value="1"/>
</dbReference>
<dbReference type="PANTHER" id="PTHR15892:SF2">
    <property type="entry name" value="LARGE RIBOSOMAL SUBUNIT PROTEIN UL30M"/>
    <property type="match status" value="1"/>
</dbReference>
<dbReference type="PANTHER" id="PTHR15892">
    <property type="entry name" value="MITOCHONDRIAL RIBOSOMAL PROTEIN L30"/>
    <property type="match status" value="1"/>
</dbReference>
<dbReference type="Pfam" id="PF00327">
    <property type="entry name" value="Ribosomal_L30"/>
    <property type="match status" value="1"/>
</dbReference>
<dbReference type="PIRSF" id="PIRSF002211">
    <property type="entry name" value="Ribosomal_L30_bac-type"/>
    <property type="match status" value="1"/>
</dbReference>
<dbReference type="SUPFAM" id="SSF55129">
    <property type="entry name" value="Ribosomal protein L30p/L7e"/>
    <property type="match status" value="1"/>
</dbReference>
<dbReference type="PROSITE" id="PS00634">
    <property type="entry name" value="RIBOSOMAL_L30"/>
    <property type="match status" value="1"/>
</dbReference>
<feature type="chain" id="PRO_1000087263" description="Large ribosomal subunit protein uL30">
    <location>
        <begin position="1"/>
        <end position="59"/>
    </location>
</feature>
<name>RL30_SALPB</name>
<protein>
    <recommendedName>
        <fullName evidence="1">Large ribosomal subunit protein uL30</fullName>
    </recommendedName>
    <alternativeName>
        <fullName evidence="2">50S ribosomal protein L30</fullName>
    </alternativeName>
</protein>
<reference key="1">
    <citation type="submission" date="2007-11" db="EMBL/GenBank/DDBJ databases">
        <authorList>
            <consortium name="The Salmonella enterica serovar Paratyphi B Genome Sequencing Project"/>
            <person name="McClelland M."/>
            <person name="Sanderson E.K."/>
            <person name="Porwollik S."/>
            <person name="Spieth J."/>
            <person name="Clifton W.S."/>
            <person name="Fulton R."/>
            <person name="Cordes M."/>
            <person name="Wollam A."/>
            <person name="Shah N."/>
            <person name="Pepin K."/>
            <person name="Bhonagiri V."/>
            <person name="Nash W."/>
            <person name="Johnson M."/>
            <person name="Thiruvilangam P."/>
            <person name="Wilson R."/>
        </authorList>
    </citation>
    <scope>NUCLEOTIDE SEQUENCE [LARGE SCALE GENOMIC DNA]</scope>
    <source>
        <strain>ATCC BAA-1250 / SPB7</strain>
    </source>
</reference>
<sequence length="59" mass="6514">MAKTIKITQTRSAIGRLPKHKATLLGLGLRRIGHTVEREDTPAVRGMVNAVSFMVKVEE</sequence>
<evidence type="ECO:0000255" key="1">
    <source>
        <dbReference type="HAMAP-Rule" id="MF_01371"/>
    </source>
</evidence>
<evidence type="ECO:0000305" key="2"/>
<proteinExistence type="inferred from homology"/>
<gene>
    <name evidence="1" type="primary">rpmD</name>
    <name type="ordered locus">SPAB_04263</name>
</gene>
<keyword id="KW-0687">Ribonucleoprotein</keyword>
<keyword id="KW-0689">Ribosomal protein</keyword>